<proteinExistence type="inferred from homology"/>
<feature type="chain" id="PRO_1000071557" description="Thymidylate kinase">
    <location>
        <begin position="1"/>
        <end position="197"/>
    </location>
</feature>
<feature type="binding site" evidence="1">
    <location>
        <begin position="7"/>
        <end position="14"/>
    </location>
    <ligand>
        <name>ATP</name>
        <dbReference type="ChEBI" id="CHEBI:30616"/>
    </ligand>
</feature>
<reference key="1">
    <citation type="submission" date="2007-07" db="EMBL/GenBank/DDBJ databases">
        <title>Complete sequence of Fervidobacterium nodosum Rt17-B1.</title>
        <authorList>
            <consortium name="US DOE Joint Genome Institute"/>
            <person name="Copeland A."/>
            <person name="Lucas S."/>
            <person name="Lapidus A."/>
            <person name="Barry K."/>
            <person name="Glavina del Rio T."/>
            <person name="Dalin E."/>
            <person name="Tice H."/>
            <person name="Pitluck S."/>
            <person name="Saunders E."/>
            <person name="Brettin T."/>
            <person name="Bruce D."/>
            <person name="Detter J.C."/>
            <person name="Han C."/>
            <person name="Schmutz J."/>
            <person name="Larimer F."/>
            <person name="Land M."/>
            <person name="Hauser L."/>
            <person name="Kyrpides N."/>
            <person name="Mikhailova N."/>
            <person name="Nelson K."/>
            <person name="Gogarten J.P."/>
            <person name="Noll K."/>
            <person name="Richardson P."/>
        </authorList>
    </citation>
    <scope>NUCLEOTIDE SEQUENCE [LARGE SCALE GENOMIC DNA]</scope>
    <source>
        <strain>ATCC 35602 / DSM 5306 / Rt17-B1</strain>
    </source>
</reference>
<accession>A7HKW8</accession>
<name>KTHY_FERNB</name>
<comment type="function">
    <text evidence="1">Phosphorylation of dTMP to form dTDP in both de novo and salvage pathways of dTTP synthesis.</text>
</comment>
<comment type="catalytic activity">
    <reaction evidence="1">
        <text>dTMP + ATP = dTDP + ADP</text>
        <dbReference type="Rhea" id="RHEA:13517"/>
        <dbReference type="ChEBI" id="CHEBI:30616"/>
        <dbReference type="ChEBI" id="CHEBI:58369"/>
        <dbReference type="ChEBI" id="CHEBI:63528"/>
        <dbReference type="ChEBI" id="CHEBI:456216"/>
        <dbReference type="EC" id="2.7.4.9"/>
    </reaction>
</comment>
<comment type="similarity">
    <text evidence="1">Belongs to the thymidylate kinase family.</text>
</comment>
<dbReference type="EC" id="2.7.4.9" evidence="1"/>
<dbReference type="EMBL" id="CP000771">
    <property type="protein sequence ID" value="ABS60551.1"/>
    <property type="molecule type" value="Genomic_DNA"/>
</dbReference>
<dbReference type="RefSeq" id="WP_011993870.1">
    <property type="nucleotide sequence ID" value="NC_009718.1"/>
</dbReference>
<dbReference type="SMR" id="A7HKW8"/>
<dbReference type="STRING" id="381764.Fnod_0696"/>
<dbReference type="KEGG" id="fno:Fnod_0696"/>
<dbReference type="eggNOG" id="COG0125">
    <property type="taxonomic scope" value="Bacteria"/>
</dbReference>
<dbReference type="HOGENOM" id="CLU_049131_0_2_0"/>
<dbReference type="OrthoDB" id="9774907at2"/>
<dbReference type="Proteomes" id="UP000002415">
    <property type="component" value="Chromosome"/>
</dbReference>
<dbReference type="GO" id="GO:0005829">
    <property type="term" value="C:cytosol"/>
    <property type="evidence" value="ECO:0007669"/>
    <property type="project" value="TreeGrafter"/>
</dbReference>
<dbReference type="GO" id="GO:0005524">
    <property type="term" value="F:ATP binding"/>
    <property type="evidence" value="ECO:0007669"/>
    <property type="project" value="UniProtKB-UniRule"/>
</dbReference>
<dbReference type="GO" id="GO:0004798">
    <property type="term" value="F:dTMP kinase activity"/>
    <property type="evidence" value="ECO:0007669"/>
    <property type="project" value="UniProtKB-UniRule"/>
</dbReference>
<dbReference type="GO" id="GO:0006233">
    <property type="term" value="P:dTDP biosynthetic process"/>
    <property type="evidence" value="ECO:0007669"/>
    <property type="project" value="InterPro"/>
</dbReference>
<dbReference type="GO" id="GO:0006235">
    <property type="term" value="P:dTTP biosynthetic process"/>
    <property type="evidence" value="ECO:0007669"/>
    <property type="project" value="UniProtKB-UniRule"/>
</dbReference>
<dbReference type="GO" id="GO:0006227">
    <property type="term" value="P:dUDP biosynthetic process"/>
    <property type="evidence" value="ECO:0007669"/>
    <property type="project" value="TreeGrafter"/>
</dbReference>
<dbReference type="CDD" id="cd01672">
    <property type="entry name" value="TMPK"/>
    <property type="match status" value="1"/>
</dbReference>
<dbReference type="FunFam" id="3.40.50.300:FF:000225">
    <property type="entry name" value="Thymidylate kinase"/>
    <property type="match status" value="1"/>
</dbReference>
<dbReference type="Gene3D" id="3.40.50.300">
    <property type="entry name" value="P-loop containing nucleotide triphosphate hydrolases"/>
    <property type="match status" value="1"/>
</dbReference>
<dbReference type="HAMAP" id="MF_00165">
    <property type="entry name" value="Thymidylate_kinase"/>
    <property type="match status" value="1"/>
</dbReference>
<dbReference type="InterPro" id="IPR027417">
    <property type="entry name" value="P-loop_NTPase"/>
</dbReference>
<dbReference type="InterPro" id="IPR039430">
    <property type="entry name" value="Thymidylate_kin-like_dom"/>
</dbReference>
<dbReference type="InterPro" id="IPR018094">
    <property type="entry name" value="Thymidylate_kinase"/>
</dbReference>
<dbReference type="NCBIfam" id="TIGR00041">
    <property type="entry name" value="DTMP_kinase"/>
    <property type="match status" value="1"/>
</dbReference>
<dbReference type="PANTHER" id="PTHR10344">
    <property type="entry name" value="THYMIDYLATE KINASE"/>
    <property type="match status" value="1"/>
</dbReference>
<dbReference type="PANTHER" id="PTHR10344:SF4">
    <property type="entry name" value="UMP-CMP KINASE 2, MITOCHONDRIAL"/>
    <property type="match status" value="1"/>
</dbReference>
<dbReference type="Pfam" id="PF02223">
    <property type="entry name" value="Thymidylate_kin"/>
    <property type="match status" value="1"/>
</dbReference>
<dbReference type="SUPFAM" id="SSF52540">
    <property type="entry name" value="P-loop containing nucleoside triphosphate hydrolases"/>
    <property type="match status" value="1"/>
</dbReference>
<protein>
    <recommendedName>
        <fullName evidence="1">Thymidylate kinase</fullName>
        <ecNumber evidence="1">2.7.4.9</ecNumber>
    </recommendedName>
    <alternativeName>
        <fullName evidence="1">dTMP kinase</fullName>
    </alternativeName>
</protein>
<organism>
    <name type="scientific">Fervidobacterium nodosum (strain ATCC 35602 / DSM 5306 / Rt17-B1)</name>
    <dbReference type="NCBI Taxonomy" id="381764"/>
    <lineage>
        <taxon>Bacteria</taxon>
        <taxon>Thermotogati</taxon>
        <taxon>Thermotogota</taxon>
        <taxon>Thermotogae</taxon>
        <taxon>Thermotogales</taxon>
        <taxon>Fervidobacteriaceae</taxon>
        <taxon>Fervidobacterium</taxon>
    </lineage>
</organism>
<evidence type="ECO:0000255" key="1">
    <source>
        <dbReference type="HAMAP-Rule" id="MF_00165"/>
    </source>
</evidence>
<keyword id="KW-0067">ATP-binding</keyword>
<keyword id="KW-0418">Kinase</keyword>
<keyword id="KW-0545">Nucleotide biosynthesis</keyword>
<keyword id="KW-0547">Nucleotide-binding</keyword>
<keyword id="KW-1185">Reference proteome</keyword>
<keyword id="KW-0808">Transferase</keyword>
<gene>
    <name evidence="1" type="primary">tmk</name>
    <name type="ordered locus">Fnod_0696</name>
</gene>
<sequence length="197" mass="22516">MFVSFEGIDGCGKSTQVNLLVNYLEEKGIPYIKVREPGGTHLGEKIRELLITQEMCARSELLLFLASRAQLVESVIKPALKNGKIVIADRFAHSSVAYQGCGRELGPETVKILNDFATDKTYPDIVFYIDVPVNVAMERMKNQHKDRIEKEGKEFWESIRNCYLKMAKENENFVIIDGTRTIEEIHREIVKVFNAYL</sequence>